<dbReference type="EC" id="2.1.1.359"/>
<dbReference type="EMBL" id="AE014298">
    <property type="protein sequence ID" value="AAF48273.2"/>
    <property type="status" value="ALT_SEQ"/>
    <property type="molecule type" value="Genomic_DNA"/>
</dbReference>
<dbReference type="EMBL" id="BT025042">
    <property type="protein sequence ID" value="ABE73213.1"/>
    <property type="molecule type" value="mRNA"/>
</dbReference>
<dbReference type="EMBL" id="AY050232">
    <property type="protein sequence ID" value="AAK84931.1"/>
    <property type="status" value="ALT_FRAME"/>
    <property type="molecule type" value="mRNA"/>
</dbReference>
<dbReference type="RefSeq" id="NP_001162740.1">
    <property type="nucleotide sequence ID" value="NM_001169269.2"/>
</dbReference>
<dbReference type="RefSeq" id="NP_572888.2">
    <property type="nucleotide sequence ID" value="NM_132660.4"/>
</dbReference>
<dbReference type="SMR" id="Q9VYD1"/>
<dbReference type="BioGRID" id="58681">
    <property type="interactions" value="4"/>
</dbReference>
<dbReference type="FunCoup" id="Q9VYD1">
    <property type="interactions" value="507"/>
</dbReference>
<dbReference type="IntAct" id="Q9VYD1">
    <property type="interactions" value="1"/>
</dbReference>
<dbReference type="STRING" id="7227.FBpp0073610"/>
<dbReference type="GlyGen" id="Q9VYD1">
    <property type="glycosylation" value="3 sites"/>
</dbReference>
<dbReference type="iPTMnet" id="Q9VYD1"/>
<dbReference type="PaxDb" id="7227-FBpp0073610"/>
<dbReference type="EnsemblMetazoa" id="FBtr0301559">
    <property type="protein sequence ID" value="FBpp0290774"/>
    <property type="gene ID" value="FBgn0030486"/>
</dbReference>
<dbReference type="GeneID" id="32301"/>
<dbReference type="KEGG" id="dme:Dmel_CG1716"/>
<dbReference type="UCSC" id="CG1716-RA">
    <property type="organism name" value="d. melanogaster"/>
</dbReference>
<dbReference type="AGR" id="FB:FBgn0030486"/>
<dbReference type="CTD" id="32301"/>
<dbReference type="FlyBase" id="FBgn0030486">
    <property type="gene designation" value="Set2"/>
</dbReference>
<dbReference type="VEuPathDB" id="VectorBase:FBgn0030486"/>
<dbReference type="eggNOG" id="KOG4442">
    <property type="taxonomic scope" value="Eukaryota"/>
</dbReference>
<dbReference type="GeneTree" id="ENSGT00940000172873"/>
<dbReference type="HOGENOM" id="CLU_000516_0_0_1"/>
<dbReference type="InParanoid" id="Q9VYD1"/>
<dbReference type="OrthoDB" id="308383at2759"/>
<dbReference type="PhylomeDB" id="Q9VYD1"/>
<dbReference type="BRENDA" id="2.1.1.359">
    <property type="organism ID" value="1994"/>
</dbReference>
<dbReference type="BioGRID-ORCS" id="32301">
    <property type="hits" value="0 hits in 1 CRISPR screen"/>
</dbReference>
<dbReference type="GenomeRNAi" id="32301"/>
<dbReference type="PRO" id="PR:Q9VYD1"/>
<dbReference type="Proteomes" id="UP000000803">
    <property type="component" value="Chromosome X"/>
</dbReference>
<dbReference type="Bgee" id="FBgn0030486">
    <property type="expression patterns" value="Expressed in egg cell and 137 other cell types or tissues"/>
</dbReference>
<dbReference type="ExpressionAtlas" id="Q9VYD1">
    <property type="expression patterns" value="baseline and differential"/>
</dbReference>
<dbReference type="GO" id="GO:0000785">
    <property type="term" value="C:chromatin"/>
    <property type="evidence" value="ECO:0000318"/>
    <property type="project" value="GO_Central"/>
</dbReference>
<dbReference type="GO" id="GO:0005634">
    <property type="term" value="C:nucleus"/>
    <property type="evidence" value="ECO:0000314"/>
    <property type="project" value="FlyBase"/>
</dbReference>
<dbReference type="GO" id="GO:0003677">
    <property type="term" value="F:DNA binding"/>
    <property type="evidence" value="ECO:0007669"/>
    <property type="project" value="InterPro"/>
</dbReference>
<dbReference type="GO" id="GO:0046975">
    <property type="term" value="F:histone H3K36 methyltransferase activity"/>
    <property type="evidence" value="ECO:0000314"/>
    <property type="project" value="UniProtKB"/>
</dbReference>
<dbReference type="GO" id="GO:0140955">
    <property type="term" value="F:histone H3K36 trimethyltransferase activity"/>
    <property type="evidence" value="ECO:0000314"/>
    <property type="project" value="UniProt"/>
</dbReference>
<dbReference type="GO" id="GO:0140946">
    <property type="term" value="F:histone H3K4 dimethyltransferase activity"/>
    <property type="evidence" value="ECO:0000250"/>
    <property type="project" value="UniProtKB"/>
</dbReference>
<dbReference type="GO" id="GO:0046872">
    <property type="term" value="F:metal ion binding"/>
    <property type="evidence" value="ECO:0007669"/>
    <property type="project" value="UniProtKB-KW"/>
</dbReference>
<dbReference type="GO" id="GO:0051219">
    <property type="term" value="F:phosphoprotein binding"/>
    <property type="evidence" value="ECO:0000353"/>
    <property type="project" value="FlyBase"/>
</dbReference>
<dbReference type="GO" id="GO:0006325">
    <property type="term" value="P:chromatin organization"/>
    <property type="evidence" value="ECO:0000314"/>
    <property type="project" value="UniProt"/>
</dbReference>
<dbReference type="GO" id="GO:0035076">
    <property type="term" value="P:ecdysone receptor signaling pathway"/>
    <property type="evidence" value="ECO:0000316"/>
    <property type="project" value="FlyBase"/>
</dbReference>
<dbReference type="GO" id="GO:0007281">
    <property type="term" value="P:germ cell development"/>
    <property type="evidence" value="ECO:0000314"/>
    <property type="project" value="UniProtKB"/>
</dbReference>
<dbReference type="GO" id="GO:0002168">
    <property type="term" value="P:instar larval development"/>
    <property type="evidence" value="ECO:0000315"/>
    <property type="project" value="FlyBase"/>
</dbReference>
<dbReference type="GO" id="GO:0032259">
    <property type="term" value="P:methylation"/>
    <property type="evidence" value="ECO:0007669"/>
    <property type="project" value="UniProtKB-KW"/>
</dbReference>
<dbReference type="GO" id="GO:0048599">
    <property type="term" value="P:oocyte development"/>
    <property type="evidence" value="ECO:0000314"/>
    <property type="project" value="UniProtKB"/>
</dbReference>
<dbReference type="GO" id="GO:0006355">
    <property type="term" value="P:regulation of DNA-templated transcription"/>
    <property type="evidence" value="ECO:0000318"/>
    <property type="project" value="GO_Central"/>
</dbReference>
<dbReference type="GO" id="GO:0141005">
    <property type="term" value="P:transposable element silencing by heterochromatin formation"/>
    <property type="evidence" value="ECO:0000315"/>
    <property type="project" value="FlyBase"/>
</dbReference>
<dbReference type="GO" id="GO:0035220">
    <property type="term" value="P:wing disc development"/>
    <property type="evidence" value="ECO:0000315"/>
    <property type="project" value="FlyBase"/>
</dbReference>
<dbReference type="CDD" id="cd19172">
    <property type="entry name" value="SET_SETD2"/>
    <property type="match status" value="1"/>
</dbReference>
<dbReference type="CDD" id="cd00201">
    <property type="entry name" value="WW"/>
    <property type="match status" value="1"/>
</dbReference>
<dbReference type="FunFam" id="2.170.270.10:FF:000016">
    <property type="entry name" value="Histone-lysine N-methyltransferase"/>
    <property type="match status" value="1"/>
</dbReference>
<dbReference type="Gene3D" id="2.20.70.10">
    <property type="match status" value="1"/>
</dbReference>
<dbReference type="Gene3D" id="2.170.270.10">
    <property type="entry name" value="SET domain"/>
    <property type="match status" value="1"/>
</dbReference>
<dbReference type="Gene3D" id="1.10.1740.100">
    <property type="entry name" value="Set2, Rpb1 interacting domain"/>
    <property type="match status" value="1"/>
</dbReference>
<dbReference type="InterPro" id="IPR017956">
    <property type="entry name" value="AT_hook_DNA-bd_motif"/>
</dbReference>
<dbReference type="InterPro" id="IPR006560">
    <property type="entry name" value="AWS_dom"/>
</dbReference>
<dbReference type="InterPro" id="IPR003616">
    <property type="entry name" value="Post-SET_dom"/>
</dbReference>
<dbReference type="InterPro" id="IPR001214">
    <property type="entry name" value="SET_dom"/>
</dbReference>
<dbReference type="InterPro" id="IPR046341">
    <property type="entry name" value="SET_dom_sf"/>
</dbReference>
<dbReference type="InterPro" id="IPR044437">
    <property type="entry name" value="SETD2/Set2_SET"/>
</dbReference>
<dbReference type="InterPro" id="IPR042294">
    <property type="entry name" value="SETD2_animal"/>
</dbReference>
<dbReference type="InterPro" id="IPR013257">
    <property type="entry name" value="SRI"/>
</dbReference>
<dbReference type="InterPro" id="IPR038190">
    <property type="entry name" value="SRI_sf"/>
</dbReference>
<dbReference type="InterPro" id="IPR001202">
    <property type="entry name" value="WW_dom"/>
</dbReference>
<dbReference type="InterPro" id="IPR036020">
    <property type="entry name" value="WW_dom_sf"/>
</dbReference>
<dbReference type="PANTHER" id="PTHR46711">
    <property type="entry name" value="HISTONE-LYSINE N-METHYLTRANSFERASE SETD2"/>
    <property type="match status" value="1"/>
</dbReference>
<dbReference type="PANTHER" id="PTHR46711:SF1">
    <property type="entry name" value="HISTONE-LYSINE N-METHYLTRANSFERASE SETD2"/>
    <property type="match status" value="1"/>
</dbReference>
<dbReference type="Pfam" id="PF17907">
    <property type="entry name" value="AWS"/>
    <property type="match status" value="1"/>
</dbReference>
<dbReference type="Pfam" id="PF00856">
    <property type="entry name" value="SET"/>
    <property type="match status" value="1"/>
</dbReference>
<dbReference type="Pfam" id="PF08236">
    <property type="entry name" value="SRI"/>
    <property type="match status" value="1"/>
</dbReference>
<dbReference type="Pfam" id="PF00397">
    <property type="entry name" value="WW"/>
    <property type="match status" value="1"/>
</dbReference>
<dbReference type="SMART" id="SM00384">
    <property type="entry name" value="AT_hook"/>
    <property type="match status" value="2"/>
</dbReference>
<dbReference type="SMART" id="SM00570">
    <property type="entry name" value="AWS"/>
    <property type="match status" value="1"/>
</dbReference>
<dbReference type="SMART" id="SM00508">
    <property type="entry name" value="PostSET"/>
    <property type="match status" value="1"/>
</dbReference>
<dbReference type="SMART" id="SM00317">
    <property type="entry name" value="SET"/>
    <property type="match status" value="1"/>
</dbReference>
<dbReference type="SMART" id="SM00456">
    <property type="entry name" value="WW"/>
    <property type="match status" value="1"/>
</dbReference>
<dbReference type="SUPFAM" id="SSF82199">
    <property type="entry name" value="SET domain"/>
    <property type="match status" value="1"/>
</dbReference>
<dbReference type="SUPFAM" id="SSF51045">
    <property type="entry name" value="WW domain"/>
    <property type="match status" value="1"/>
</dbReference>
<dbReference type="PROSITE" id="PS51215">
    <property type="entry name" value="AWS"/>
    <property type="match status" value="1"/>
</dbReference>
<dbReference type="PROSITE" id="PS50868">
    <property type="entry name" value="POST_SET"/>
    <property type="match status" value="1"/>
</dbReference>
<dbReference type="PROSITE" id="PS50280">
    <property type="entry name" value="SET"/>
    <property type="match status" value="1"/>
</dbReference>
<dbReference type="PROSITE" id="PS01159">
    <property type="entry name" value="WW_DOMAIN_1"/>
    <property type="match status" value="1"/>
</dbReference>
<dbReference type="PROSITE" id="PS50020">
    <property type="entry name" value="WW_DOMAIN_2"/>
    <property type="match status" value="1"/>
</dbReference>
<keyword id="KW-0156">Chromatin regulator</keyword>
<keyword id="KW-0158">Chromosome</keyword>
<keyword id="KW-0217">Developmental protein</keyword>
<keyword id="KW-0221">Differentiation</keyword>
<keyword id="KW-0479">Metal-binding</keyword>
<keyword id="KW-0489">Methyltransferase</keyword>
<keyword id="KW-0539">Nucleus</keyword>
<keyword id="KW-0597">Phosphoprotein</keyword>
<keyword id="KW-1185">Reference proteome</keyword>
<keyword id="KW-0677">Repeat</keyword>
<keyword id="KW-0949">S-adenosyl-L-methionine</keyword>
<keyword id="KW-0804">Transcription</keyword>
<keyword id="KW-0805">Transcription regulation</keyword>
<keyword id="KW-0808">Transferase</keyword>
<keyword id="KW-0862">Zinc</keyword>
<feature type="chain" id="PRO_0000259523" description="Histone-lysine N-methyltransferase Set2">
    <location>
        <begin position="1"/>
        <end position="2313"/>
    </location>
</feature>
<feature type="domain" description="AWS" evidence="5">
    <location>
        <begin position="1307"/>
        <end position="1360"/>
    </location>
</feature>
<feature type="domain" description="SET" evidence="3">
    <location>
        <begin position="1362"/>
        <end position="1479"/>
    </location>
</feature>
<feature type="domain" description="Post-SET" evidence="2">
    <location>
        <begin position="1486"/>
        <end position="1502"/>
    </location>
</feature>
<feature type="domain" description="WW" evidence="4">
    <location>
        <begin position="1963"/>
        <end position="1996"/>
    </location>
</feature>
<feature type="DNA-binding region" description="A.T hook 1">
    <location>
        <begin position="17"/>
        <end position="29"/>
    </location>
</feature>
<feature type="DNA-binding region" description="A.T hook 2">
    <location>
        <begin position="197"/>
        <end position="209"/>
    </location>
</feature>
<feature type="region of interest" description="Disordered" evidence="6">
    <location>
        <begin position="1"/>
        <end position="115"/>
    </location>
</feature>
<feature type="region of interest" description="Disordered" evidence="6">
    <location>
        <begin position="179"/>
        <end position="442"/>
    </location>
</feature>
<feature type="region of interest" description="Disordered" evidence="6">
    <location>
        <begin position="550"/>
        <end position="858"/>
    </location>
</feature>
<feature type="region of interest" description="Disordered" evidence="6">
    <location>
        <begin position="883"/>
        <end position="1106"/>
    </location>
</feature>
<feature type="region of interest" description="Disordered" evidence="6">
    <location>
        <begin position="1118"/>
        <end position="1150"/>
    </location>
</feature>
<feature type="region of interest" description="Disordered" evidence="6">
    <location>
        <begin position="1163"/>
        <end position="1251"/>
    </location>
</feature>
<feature type="region of interest" description="Disordered" evidence="6">
    <location>
        <begin position="1501"/>
        <end position="1598"/>
    </location>
</feature>
<feature type="region of interest" description="Disordered" evidence="6">
    <location>
        <begin position="1763"/>
        <end position="1860"/>
    </location>
</feature>
<feature type="region of interest" description="Disordered" evidence="6">
    <location>
        <begin position="2177"/>
        <end position="2218"/>
    </location>
</feature>
<feature type="compositionally biased region" description="Basic and acidic residues" evidence="6">
    <location>
        <begin position="73"/>
        <end position="82"/>
    </location>
</feature>
<feature type="compositionally biased region" description="Low complexity" evidence="6">
    <location>
        <begin position="101"/>
        <end position="115"/>
    </location>
</feature>
<feature type="compositionally biased region" description="Low complexity" evidence="6">
    <location>
        <begin position="221"/>
        <end position="241"/>
    </location>
</feature>
<feature type="compositionally biased region" description="Basic residues" evidence="6">
    <location>
        <begin position="252"/>
        <end position="265"/>
    </location>
</feature>
<feature type="compositionally biased region" description="Low complexity" evidence="6">
    <location>
        <begin position="266"/>
        <end position="288"/>
    </location>
</feature>
<feature type="compositionally biased region" description="Basic and acidic residues" evidence="6">
    <location>
        <begin position="330"/>
        <end position="345"/>
    </location>
</feature>
<feature type="compositionally biased region" description="Acidic residues" evidence="6">
    <location>
        <begin position="347"/>
        <end position="356"/>
    </location>
</feature>
<feature type="compositionally biased region" description="Acidic residues" evidence="6">
    <location>
        <begin position="365"/>
        <end position="375"/>
    </location>
</feature>
<feature type="compositionally biased region" description="Acidic residues" evidence="6">
    <location>
        <begin position="388"/>
        <end position="398"/>
    </location>
</feature>
<feature type="compositionally biased region" description="Low complexity" evidence="6">
    <location>
        <begin position="412"/>
        <end position="433"/>
    </location>
</feature>
<feature type="compositionally biased region" description="Basic and acidic residues" evidence="6">
    <location>
        <begin position="552"/>
        <end position="563"/>
    </location>
</feature>
<feature type="compositionally biased region" description="Acidic residues" evidence="6">
    <location>
        <begin position="659"/>
        <end position="671"/>
    </location>
</feature>
<feature type="compositionally biased region" description="Polar residues" evidence="6">
    <location>
        <begin position="676"/>
        <end position="685"/>
    </location>
</feature>
<feature type="compositionally biased region" description="Basic and acidic residues" evidence="6">
    <location>
        <begin position="689"/>
        <end position="708"/>
    </location>
</feature>
<feature type="compositionally biased region" description="Basic and acidic residues" evidence="6">
    <location>
        <begin position="719"/>
        <end position="732"/>
    </location>
</feature>
<feature type="compositionally biased region" description="Basic and acidic residues" evidence="6">
    <location>
        <begin position="740"/>
        <end position="749"/>
    </location>
</feature>
<feature type="compositionally biased region" description="Basic and acidic residues" evidence="6">
    <location>
        <begin position="758"/>
        <end position="782"/>
    </location>
</feature>
<feature type="compositionally biased region" description="Polar residues" evidence="6">
    <location>
        <begin position="800"/>
        <end position="833"/>
    </location>
</feature>
<feature type="compositionally biased region" description="Polar residues" evidence="6">
    <location>
        <begin position="918"/>
        <end position="928"/>
    </location>
</feature>
<feature type="compositionally biased region" description="Polar residues" evidence="6">
    <location>
        <begin position="938"/>
        <end position="955"/>
    </location>
</feature>
<feature type="compositionally biased region" description="Basic residues" evidence="6">
    <location>
        <begin position="959"/>
        <end position="969"/>
    </location>
</feature>
<feature type="compositionally biased region" description="Low complexity" evidence="6">
    <location>
        <begin position="997"/>
        <end position="1010"/>
    </location>
</feature>
<feature type="compositionally biased region" description="Basic and acidic residues" evidence="6">
    <location>
        <begin position="1016"/>
        <end position="1039"/>
    </location>
</feature>
<feature type="compositionally biased region" description="Low complexity" evidence="6">
    <location>
        <begin position="1085"/>
        <end position="1097"/>
    </location>
</feature>
<feature type="compositionally biased region" description="Low complexity" evidence="6">
    <location>
        <begin position="1118"/>
        <end position="1127"/>
    </location>
</feature>
<feature type="compositionally biased region" description="Basic and acidic residues" evidence="6">
    <location>
        <begin position="1163"/>
        <end position="1183"/>
    </location>
</feature>
<feature type="compositionally biased region" description="Low complexity" evidence="6">
    <location>
        <begin position="1199"/>
        <end position="1213"/>
    </location>
</feature>
<feature type="compositionally biased region" description="Acidic residues" evidence="6">
    <location>
        <begin position="1505"/>
        <end position="1534"/>
    </location>
</feature>
<feature type="compositionally biased region" description="Basic residues" evidence="6">
    <location>
        <begin position="1539"/>
        <end position="1551"/>
    </location>
</feature>
<feature type="compositionally biased region" description="Basic and acidic residues" evidence="6">
    <location>
        <begin position="1564"/>
        <end position="1574"/>
    </location>
</feature>
<feature type="compositionally biased region" description="Basic and acidic residues" evidence="6">
    <location>
        <begin position="1763"/>
        <end position="1774"/>
    </location>
</feature>
<feature type="compositionally biased region" description="Basic and acidic residues" evidence="6">
    <location>
        <begin position="1784"/>
        <end position="1806"/>
    </location>
</feature>
<feature type="compositionally biased region" description="Polar residues" evidence="6">
    <location>
        <begin position="1817"/>
        <end position="1832"/>
    </location>
</feature>
<feature type="compositionally biased region" description="Basic and acidic residues" evidence="6">
    <location>
        <begin position="1840"/>
        <end position="1860"/>
    </location>
</feature>
<feature type="compositionally biased region" description="Basic residues" evidence="6">
    <location>
        <begin position="2193"/>
        <end position="2206"/>
    </location>
</feature>
<feature type="compositionally biased region" description="Polar residues" evidence="6">
    <location>
        <begin position="2207"/>
        <end position="2216"/>
    </location>
</feature>
<feature type="binding site" evidence="1">
    <location>
        <position position="1312"/>
    </location>
    <ligand>
        <name>Zn(2+)</name>
        <dbReference type="ChEBI" id="CHEBI:29105"/>
        <label>1</label>
    </ligand>
</feature>
<feature type="binding site" evidence="1">
    <location>
        <position position="1314"/>
    </location>
    <ligand>
        <name>Zn(2+)</name>
        <dbReference type="ChEBI" id="CHEBI:29105"/>
        <label>1</label>
    </ligand>
</feature>
<feature type="binding site" evidence="1">
    <location>
        <position position="1328"/>
    </location>
    <ligand>
        <name>Zn(2+)</name>
        <dbReference type="ChEBI" id="CHEBI:29105"/>
        <label>1</label>
    </ligand>
</feature>
<feature type="binding site" evidence="1">
    <location>
        <position position="1328"/>
    </location>
    <ligand>
        <name>Zn(2+)</name>
        <dbReference type="ChEBI" id="CHEBI:29105"/>
        <label>2</label>
    </ligand>
</feature>
<feature type="binding site" evidence="1">
    <location>
        <position position="1332"/>
    </location>
    <ligand>
        <name>Zn(2+)</name>
        <dbReference type="ChEBI" id="CHEBI:29105"/>
        <label>1</label>
    </ligand>
</feature>
<feature type="binding site" evidence="1">
    <location>
        <position position="1341"/>
    </location>
    <ligand>
        <name>Zn(2+)</name>
        <dbReference type="ChEBI" id="CHEBI:29105"/>
        <label>2</label>
    </ligand>
</feature>
<feature type="binding site" evidence="1">
    <location>
        <position position="1345"/>
    </location>
    <ligand>
        <name>Zn(2+)</name>
        <dbReference type="ChEBI" id="CHEBI:29105"/>
        <label>2</label>
    </ligand>
</feature>
<feature type="binding site" evidence="1">
    <location>
        <position position="1351"/>
    </location>
    <ligand>
        <name>Zn(2+)</name>
        <dbReference type="ChEBI" id="CHEBI:29105"/>
        <label>2</label>
    </ligand>
</feature>
<feature type="binding site" evidence="1">
    <location>
        <begin position="1415"/>
        <end position="1417"/>
    </location>
    <ligand>
        <name>S-adenosyl-L-methionine</name>
        <dbReference type="ChEBI" id="CHEBI:59789"/>
    </ligand>
</feature>
<feature type="binding site" evidence="1">
    <location>
        <begin position="1440"/>
        <end position="1441"/>
    </location>
    <ligand>
        <name>S-adenosyl-L-methionine</name>
        <dbReference type="ChEBI" id="CHEBI:59789"/>
    </ligand>
</feature>
<feature type="binding site" evidence="1">
    <location>
        <position position="1443"/>
    </location>
    <ligand>
        <name>Zn(2+)</name>
        <dbReference type="ChEBI" id="CHEBI:29105"/>
        <label>3</label>
    </ligand>
</feature>
<feature type="binding site" evidence="1">
    <location>
        <position position="1488"/>
    </location>
    <ligand>
        <name>S-adenosyl-L-methionine</name>
        <dbReference type="ChEBI" id="CHEBI:59789"/>
    </ligand>
</feature>
<feature type="binding site" evidence="1">
    <location>
        <position position="1490"/>
    </location>
    <ligand>
        <name>Zn(2+)</name>
        <dbReference type="ChEBI" id="CHEBI:29105"/>
        <label>3</label>
    </ligand>
</feature>
<feature type="binding site" evidence="1">
    <location>
        <position position="1491"/>
    </location>
    <ligand>
        <name>S-adenosyl-L-methionine</name>
        <dbReference type="ChEBI" id="CHEBI:59789"/>
    </ligand>
</feature>
<feature type="binding site" evidence="1">
    <location>
        <position position="1492"/>
    </location>
    <ligand>
        <name>Zn(2+)</name>
        <dbReference type="ChEBI" id="CHEBI:29105"/>
        <label>3</label>
    </ligand>
</feature>
<feature type="binding site" evidence="1">
    <location>
        <position position="1497"/>
    </location>
    <ligand>
        <name>Zn(2+)</name>
        <dbReference type="ChEBI" id="CHEBI:29105"/>
        <label>3</label>
    </ligand>
</feature>
<feature type="modified residue" description="Phosphothreonine" evidence="9">
    <location>
        <position position="404"/>
    </location>
</feature>
<feature type="modified residue" description="Phosphoserine" evidence="9">
    <location>
        <position position="786"/>
    </location>
</feature>
<feature type="modified residue" description="Phosphoserine" evidence="9">
    <location>
        <position position="788"/>
    </location>
</feature>
<feature type="modified residue" description="Phosphoserine" evidence="9">
    <location>
        <position position="2130"/>
    </location>
</feature>
<feature type="modified residue" description="Phosphoserine" evidence="9">
    <location>
        <position position="2131"/>
    </location>
</feature>
<feature type="sequence conflict" description="In Ref. 4; AAK84931." evidence="13" ref="4">
    <original>F</original>
    <variation>S</variation>
    <location>
        <position position="490"/>
    </location>
</feature>
<feature type="sequence conflict" description="In Ref. 4; AAK84931." evidence="13" ref="4">
    <original>C</original>
    <variation>R</variation>
    <location>
        <position position="500"/>
    </location>
</feature>
<feature type="sequence conflict" description="In Ref. 4; AAK84931." evidence="13" ref="4">
    <original>M</original>
    <variation>L</variation>
    <location>
        <position position="509"/>
    </location>
</feature>
<feature type="sequence conflict" description="In Ref. 4; AAK84931." evidence="13" ref="4">
    <original>T</original>
    <variation>A</variation>
    <location>
        <position position="700"/>
    </location>
</feature>
<feature type="sequence conflict" description="In Ref. 4; AAK84931." evidence="13" ref="4">
    <original>N</original>
    <variation>K</variation>
    <location>
        <position position="710"/>
    </location>
</feature>
<feature type="sequence conflict" description="In Ref. 4; AAK84931." evidence="13" ref="4">
    <original>K</original>
    <variation>R</variation>
    <location>
        <position position="737"/>
    </location>
</feature>
<feature type="sequence conflict" description="In Ref. 4; AAK84931." evidence="13" ref="4">
    <original>E</original>
    <variation>A</variation>
    <location>
        <position position="2148"/>
    </location>
</feature>
<feature type="sequence conflict" description="In Ref. 4; AAK84931." evidence="13" ref="4">
    <original>T</original>
    <variation>S</variation>
    <location>
        <position position="2179"/>
    </location>
</feature>
<feature type="sequence conflict" description="In Ref. 4; AAK84931." evidence="13" ref="4">
    <original>S</original>
    <variation>N</variation>
    <location>
        <position position="2202"/>
    </location>
</feature>
<feature type="sequence conflict" description="In Ref. 4; AAK84931." evidence="13" ref="4">
    <original>T</original>
    <variation>S</variation>
    <location>
        <position position="2215"/>
    </location>
</feature>
<accession>Q9VYD1</accession>
<accession>Q1RL18</accession>
<accession>Q961S6</accession>
<accession>Q9VYD0</accession>
<reference key="1">
    <citation type="journal article" date="2000" name="Science">
        <title>The genome sequence of Drosophila melanogaster.</title>
        <authorList>
            <person name="Adams M.D."/>
            <person name="Celniker S.E."/>
            <person name="Holt R.A."/>
            <person name="Evans C.A."/>
            <person name="Gocayne J.D."/>
            <person name="Amanatides P.G."/>
            <person name="Scherer S.E."/>
            <person name="Li P.W."/>
            <person name="Hoskins R.A."/>
            <person name="Galle R.F."/>
            <person name="George R.A."/>
            <person name="Lewis S.E."/>
            <person name="Richards S."/>
            <person name="Ashburner M."/>
            <person name="Henderson S.N."/>
            <person name="Sutton G.G."/>
            <person name="Wortman J.R."/>
            <person name="Yandell M.D."/>
            <person name="Zhang Q."/>
            <person name="Chen L.X."/>
            <person name="Brandon R.C."/>
            <person name="Rogers Y.-H.C."/>
            <person name="Blazej R.G."/>
            <person name="Champe M."/>
            <person name="Pfeiffer B.D."/>
            <person name="Wan K.H."/>
            <person name="Doyle C."/>
            <person name="Baxter E.G."/>
            <person name="Helt G."/>
            <person name="Nelson C.R."/>
            <person name="Miklos G.L.G."/>
            <person name="Abril J.F."/>
            <person name="Agbayani A."/>
            <person name="An H.-J."/>
            <person name="Andrews-Pfannkoch C."/>
            <person name="Baldwin D."/>
            <person name="Ballew R.M."/>
            <person name="Basu A."/>
            <person name="Baxendale J."/>
            <person name="Bayraktaroglu L."/>
            <person name="Beasley E.M."/>
            <person name="Beeson K.Y."/>
            <person name="Benos P.V."/>
            <person name="Berman B.P."/>
            <person name="Bhandari D."/>
            <person name="Bolshakov S."/>
            <person name="Borkova D."/>
            <person name="Botchan M.R."/>
            <person name="Bouck J."/>
            <person name="Brokstein P."/>
            <person name="Brottier P."/>
            <person name="Burtis K.C."/>
            <person name="Busam D.A."/>
            <person name="Butler H."/>
            <person name="Cadieu E."/>
            <person name="Center A."/>
            <person name="Chandra I."/>
            <person name="Cherry J.M."/>
            <person name="Cawley S."/>
            <person name="Dahlke C."/>
            <person name="Davenport L.B."/>
            <person name="Davies P."/>
            <person name="de Pablos B."/>
            <person name="Delcher A."/>
            <person name="Deng Z."/>
            <person name="Mays A.D."/>
            <person name="Dew I."/>
            <person name="Dietz S.M."/>
            <person name="Dodson K."/>
            <person name="Doup L.E."/>
            <person name="Downes M."/>
            <person name="Dugan-Rocha S."/>
            <person name="Dunkov B.C."/>
            <person name="Dunn P."/>
            <person name="Durbin K.J."/>
            <person name="Evangelista C.C."/>
            <person name="Ferraz C."/>
            <person name="Ferriera S."/>
            <person name="Fleischmann W."/>
            <person name="Fosler C."/>
            <person name="Gabrielian A.E."/>
            <person name="Garg N.S."/>
            <person name="Gelbart W.M."/>
            <person name="Glasser K."/>
            <person name="Glodek A."/>
            <person name="Gong F."/>
            <person name="Gorrell J.H."/>
            <person name="Gu Z."/>
            <person name="Guan P."/>
            <person name="Harris M."/>
            <person name="Harris N.L."/>
            <person name="Harvey D.A."/>
            <person name="Heiman T.J."/>
            <person name="Hernandez J.R."/>
            <person name="Houck J."/>
            <person name="Hostin D."/>
            <person name="Houston K.A."/>
            <person name="Howland T.J."/>
            <person name="Wei M.-H."/>
            <person name="Ibegwam C."/>
            <person name="Jalali M."/>
            <person name="Kalush F."/>
            <person name="Karpen G.H."/>
            <person name="Ke Z."/>
            <person name="Kennison J.A."/>
            <person name="Ketchum K.A."/>
            <person name="Kimmel B.E."/>
            <person name="Kodira C.D."/>
            <person name="Kraft C.L."/>
            <person name="Kravitz S."/>
            <person name="Kulp D."/>
            <person name="Lai Z."/>
            <person name="Lasko P."/>
            <person name="Lei Y."/>
            <person name="Levitsky A.A."/>
            <person name="Li J.H."/>
            <person name="Li Z."/>
            <person name="Liang Y."/>
            <person name="Lin X."/>
            <person name="Liu X."/>
            <person name="Mattei B."/>
            <person name="McIntosh T.C."/>
            <person name="McLeod M.P."/>
            <person name="McPherson D."/>
            <person name="Merkulov G."/>
            <person name="Milshina N.V."/>
            <person name="Mobarry C."/>
            <person name="Morris J."/>
            <person name="Moshrefi A."/>
            <person name="Mount S.M."/>
            <person name="Moy M."/>
            <person name="Murphy B."/>
            <person name="Murphy L."/>
            <person name="Muzny D.M."/>
            <person name="Nelson D.L."/>
            <person name="Nelson D.R."/>
            <person name="Nelson K.A."/>
            <person name="Nixon K."/>
            <person name="Nusskern D.R."/>
            <person name="Pacleb J.M."/>
            <person name="Palazzolo M."/>
            <person name="Pittman G.S."/>
            <person name="Pan S."/>
            <person name="Pollard J."/>
            <person name="Puri V."/>
            <person name="Reese M.G."/>
            <person name="Reinert K."/>
            <person name="Remington K."/>
            <person name="Saunders R.D.C."/>
            <person name="Scheeler F."/>
            <person name="Shen H."/>
            <person name="Shue B.C."/>
            <person name="Siden-Kiamos I."/>
            <person name="Simpson M."/>
            <person name="Skupski M.P."/>
            <person name="Smith T.J."/>
            <person name="Spier E."/>
            <person name="Spradling A.C."/>
            <person name="Stapleton M."/>
            <person name="Strong R."/>
            <person name="Sun E."/>
            <person name="Svirskas R."/>
            <person name="Tector C."/>
            <person name="Turner R."/>
            <person name="Venter E."/>
            <person name="Wang A.H."/>
            <person name="Wang X."/>
            <person name="Wang Z.-Y."/>
            <person name="Wassarman D.A."/>
            <person name="Weinstock G.M."/>
            <person name="Weissenbach J."/>
            <person name="Williams S.M."/>
            <person name="Woodage T."/>
            <person name="Worley K.C."/>
            <person name="Wu D."/>
            <person name="Yang S."/>
            <person name="Yao Q.A."/>
            <person name="Ye J."/>
            <person name="Yeh R.-F."/>
            <person name="Zaveri J.S."/>
            <person name="Zhan M."/>
            <person name="Zhang G."/>
            <person name="Zhao Q."/>
            <person name="Zheng L."/>
            <person name="Zheng X.H."/>
            <person name="Zhong F.N."/>
            <person name="Zhong W."/>
            <person name="Zhou X."/>
            <person name="Zhu S.C."/>
            <person name="Zhu X."/>
            <person name="Smith H.O."/>
            <person name="Gibbs R.A."/>
            <person name="Myers E.W."/>
            <person name="Rubin G.M."/>
            <person name="Venter J.C."/>
        </authorList>
    </citation>
    <scope>NUCLEOTIDE SEQUENCE [LARGE SCALE GENOMIC DNA]</scope>
    <source>
        <strain>Berkeley</strain>
    </source>
</reference>
<reference key="2">
    <citation type="journal article" date="2002" name="Genome Biol.">
        <title>Annotation of the Drosophila melanogaster euchromatic genome: a systematic review.</title>
        <authorList>
            <person name="Misra S."/>
            <person name="Crosby M.A."/>
            <person name="Mungall C.J."/>
            <person name="Matthews B.B."/>
            <person name="Campbell K.S."/>
            <person name="Hradecky P."/>
            <person name="Huang Y."/>
            <person name="Kaminker J.S."/>
            <person name="Millburn G.H."/>
            <person name="Prochnik S.E."/>
            <person name="Smith C.D."/>
            <person name="Tupy J.L."/>
            <person name="Whitfield E.J."/>
            <person name="Bayraktaroglu L."/>
            <person name="Berman B.P."/>
            <person name="Bettencourt B.R."/>
            <person name="Celniker S.E."/>
            <person name="de Grey A.D.N.J."/>
            <person name="Drysdale R.A."/>
            <person name="Harris N.L."/>
            <person name="Richter J."/>
            <person name="Russo S."/>
            <person name="Schroeder A.J."/>
            <person name="Shu S.Q."/>
            <person name="Stapleton M."/>
            <person name="Yamada C."/>
            <person name="Ashburner M."/>
            <person name="Gelbart W.M."/>
            <person name="Rubin G.M."/>
            <person name="Lewis S.E."/>
        </authorList>
    </citation>
    <scope>GENOME REANNOTATION</scope>
    <source>
        <strain>Berkeley</strain>
    </source>
</reference>
<reference key="3">
    <citation type="submission" date="2006-04" db="EMBL/GenBank/DDBJ databases">
        <authorList>
            <person name="Stapleton M."/>
            <person name="Carlson J.W."/>
            <person name="Chavez C."/>
            <person name="Frise E."/>
            <person name="George R.A."/>
            <person name="Pacleb J.M."/>
            <person name="Park S."/>
            <person name="Wan K.H."/>
            <person name="Yu C."/>
            <person name="Celniker S.E."/>
        </authorList>
    </citation>
    <scope>NUCLEOTIDE SEQUENCE [LARGE SCALE MRNA]</scope>
    <source>
        <strain>Berkeley</strain>
        <tissue>Embryo</tissue>
    </source>
</reference>
<reference key="4">
    <citation type="journal article" date="2002" name="Genome Biol.">
        <title>A Drosophila full-length cDNA resource.</title>
        <authorList>
            <person name="Stapleton M."/>
            <person name="Carlson J.W."/>
            <person name="Brokstein P."/>
            <person name="Yu C."/>
            <person name="Champe M."/>
            <person name="George R.A."/>
            <person name="Guarin H."/>
            <person name="Kronmiller B."/>
            <person name="Pacleb J.M."/>
            <person name="Park S."/>
            <person name="Wan K.H."/>
            <person name="Rubin G.M."/>
            <person name="Celniker S.E."/>
        </authorList>
    </citation>
    <scope>NUCLEOTIDE SEQUENCE [LARGE SCALE MRNA] OF 478-2313</scope>
    <source>
        <strain>Berkeley</strain>
        <tissue>Embryo</tissue>
    </source>
</reference>
<reference key="5">
    <citation type="journal article" date="2008" name="J. Proteome Res.">
        <title>Phosphoproteome analysis of Drosophila melanogaster embryos.</title>
        <authorList>
            <person name="Zhai B."/>
            <person name="Villen J."/>
            <person name="Beausoleil S.A."/>
            <person name="Mintseris J."/>
            <person name="Gygi S.P."/>
        </authorList>
    </citation>
    <scope>PHOSPHORYLATION [LARGE SCALE ANALYSIS] AT THR-404; SER-786; SER-788; SER-2130 AND SER-2131</scope>
    <scope>IDENTIFICATION BY MASS SPECTROMETRY</scope>
    <source>
        <tissue>Embryo</tissue>
    </source>
</reference>
<reference key="6">
    <citation type="journal article" date="2007" name="Biochem. Biophys. Res. Commun.">
        <title>Drosophila dSet2 functions in H3-K36 methylation and is required for development.</title>
        <authorList>
            <person name="Stabell M."/>
            <person name="Larsson J."/>
            <person name="Aalen R.B."/>
            <person name="Lambertsson A."/>
        </authorList>
    </citation>
    <scope>FUNCTION</scope>
    <scope>CATALYTIC ACTIVITY</scope>
    <scope>SUBCELLULAR LOCATION</scope>
    <scope>INTERACTION WITH POLR2A</scope>
    <scope>DEVELOPMENTAL STAGE</scope>
</reference>
<reference key="7">
    <citation type="journal article" date="2007" name="Mol. Cell">
        <title>MSL complex is attracted to genes marked by H3K36 trimethylation using a sequence-independent mechanism.</title>
        <authorList>
            <person name="Larschan E."/>
            <person name="Alekseyenko A.A."/>
            <person name="Gortchakov A.A."/>
            <person name="Peng S."/>
            <person name="Li B."/>
            <person name="Yang P."/>
            <person name="Workman J.L."/>
            <person name="Park P.J."/>
            <person name="Kuroda M.I."/>
        </authorList>
    </citation>
    <scope>FUNCTION</scope>
    <scope>CATALYTIC ACTIVITY</scope>
    <scope>DISRUPTION PHENOTYPE</scope>
</reference>
<reference key="8">
    <citation type="journal article" date="2022" name="Development">
        <title>Msl3 promotes germline stem cell differentiation in female Drosophila.</title>
        <authorList>
            <person name="McCarthy A."/>
            <person name="Sarkar K."/>
            <person name="Martin E.T."/>
            <person name="Upadhyay M."/>
            <person name="Jang S."/>
            <person name="Williams N.D."/>
            <person name="Forni P.E."/>
            <person name="Buszczak M."/>
            <person name="Rangan P."/>
        </authorList>
    </citation>
    <scope>FUNCTION</scope>
</reference>
<comment type="function">
    <text evidence="7 8 10">Histone methyltransferase that specifically trimethylates 'Lys-36' of histone H3 (H3K36me3) (PubMed:17560546, PubMed:17936709). Represents the main enzyme generating H3K36me3, a specific tag for epigenetic transcriptional activation (PubMed:17560546). Involved in dosage compensation in males (X chromosome dosage compensation) by mediating formation of H3K36me3, a mark recognized by msl-3 component of the MSL complex (PubMed:17936709). In addition to its role in dosage compensation in males, promotes germline stem cell differentiation in females: catalyzes formation of H3K36me3, promoting recruitment of msl-3 and subsequent recruitment of the ATAC complex, leading to transcription of genes, such as RpS19b (PubMed:34878097).</text>
</comment>
<comment type="catalytic activity">
    <reaction evidence="7 8">
        <text>L-lysyl(36)-[histone H3] + 3 S-adenosyl-L-methionine = N(6),N(6),N(6)-trimethyl-L-lysyl(36)-[histone H3] + 3 S-adenosyl-L-homocysteine + 3 H(+)</text>
        <dbReference type="Rhea" id="RHEA:60324"/>
        <dbReference type="Rhea" id="RHEA-COMP:9785"/>
        <dbReference type="Rhea" id="RHEA-COMP:15536"/>
        <dbReference type="ChEBI" id="CHEBI:15378"/>
        <dbReference type="ChEBI" id="CHEBI:29969"/>
        <dbReference type="ChEBI" id="CHEBI:57856"/>
        <dbReference type="ChEBI" id="CHEBI:59789"/>
        <dbReference type="ChEBI" id="CHEBI:61961"/>
        <dbReference type="EC" id="2.1.1.359"/>
    </reaction>
    <physiologicalReaction direction="left-to-right" evidence="7">
        <dbReference type="Rhea" id="RHEA:60325"/>
    </physiologicalReaction>
</comment>
<comment type="subunit">
    <text evidence="7">Interacts with (phosphorylated) Polr2A.</text>
</comment>
<comment type="subcellular location">
    <subcellularLocation>
        <location evidence="7">Nucleus</location>
    </subcellularLocation>
    <subcellularLocation>
        <location evidence="7">Chromosome</location>
    </subcellularLocation>
    <text evidence="7">Localizes to euchromatin.</text>
</comment>
<comment type="developmental stage">
    <text evidence="7">Expressed throughout development.</text>
</comment>
<comment type="disruption phenotype">
    <text evidence="8">Late larval lethality.</text>
</comment>
<comment type="similarity">
    <text evidence="3">Belongs to the class V-like SAM-binding methyltransferase superfamily. Histone-lysine methyltransferase family. SET2 subfamily.</text>
</comment>
<comment type="sequence caution" evidence="13">
    <conflict type="erroneous gene model prediction">
        <sequence resource="EMBL-CDS" id="AAF48273"/>
    </conflict>
</comment>
<comment type="sequence caution" evidence="13">
    <conflict type="frameshift">
        <sequence resource="EMBL-CDS" id="AAK84931"/>
    </conflict>
</comment>
<gene>
    <name evidence="11 12 14" type="primary">Set2</name>
    <name type="ORF">CG1716</name>
</gene>
<protein>
    <recommendedName>
        <fullName evidence="13">Histone-lysine N-methyltransferase Set2</fullName>
        <shortName evidence="11">dSet2</shortName>
        <ecNumber>2.1.1.359</ecNumber>
    </recommendedName>
</protein>
<organism>
    <name type="scientific">Drosophila melanogaster</name>
    <name type="common">Fruit fly</name>
    <dbReference type="NCBI Taxonomy" id="7227"/>
    <lineage>
        <taxon>Eukaryota</taxon>
        <taxon>Metazoa</taxon>
        <taxon>Ecdysozoa</taxon>
        <taxon>Arthropoda</taxon>
        <taxon>Hexapoda</taxon>
        <taxon>Insecta</taxon>
        <taxon>Pterygota</taxon>
        <taxon>Neoptera</taxon>
        <taxon>Endopterygota</taxon>
        <taxon>Diptera</taxon>
        <taxon>Brachycera</taxon>
        <taxon>Muscomorpha</taxon>
        <taxon>Ephydroidea</taxon>
        <taxon>Drosophilidae</taxon>
        <taxon>Drosophila</taxon>
        <taxon>Sophophora</taxon>
    </lineage>
</organism>
<sequence length="2313" mass="256791">MEESGPPSNPSPVASRGRGRGRPPKVALSALGNTPPHINPSLKHADAEASPTAPEDQDSGQSECRRSSRKKIIKFDVRDLLNKNRKAHKIQIEARIDSNPSTGHSQSGTTAASTSMSTATASAASASSAATVSRLFSMFEMSHQSLPPPPPPPTALEIFAKPRPTQSLIVAQVTSEPSAVGGAHPVQTMAGLPPVTPRKRGRPRKSQLADAAIIPTVIVPSCSDSDTNSTSTTTSNMSSDSGELPGFPIQKPKSKLRVSLKRLKLGGRLESSDSGNSPSSSSPEVEPPALQDENAMDERPKQEQNLSRMVDAEENSDSDSQIIFIEIETESPKGEEEQEEGRPVEVEPQDLIDIDMELAKQEPTPDPEEDLDEIMVEVLSGPPSLWSADDEAEEEEDATVQRATPPGKEPAADSCSSAPRRSRRSAPLSGSSRQGKTLEETFAEIAAESSKQILEAEESQDQEEQHILIDLIEDTLKSDNIAASLNKDIFEPKVETKATCGEVVPRPEMVTEDVYITEGIAATLEKSAVVTKPTTEMIAETKLSDEVVIEPPLKDESDPKQTEVELPESKPAVNIPKSERILSAEVETTSSPLVPPECCTLESVSGPVLLETSLSTEEKSNENVETTPLKTEAAKEDSPPAAPEEEASNSSEEPNFLLEDYESNQEQVAEDEMMKCNNQKGQKQTPLPEMKEPEKPVAETVSKKEKAMENPARSSPAIVDKKVRAGEMEKKVVKSTKGTVPEKKMDSKKSCAAVTPAKQKESGKSAKEAILKKETEKEKSSAKLDSSSPNTLDKKGKDTAQWSPQLQTLPKSSTKPPQESAPSVISKTTSNQPAPKEEQHAAKKGLSDNSPPSVLKAKEKAVSGFVECDAMFKAMDLANAQLRLDEKNKKKLKKVPTKVEAPPKVEPPTAVPVPGQKKSLSGKTSLRRNTVYEDSPNLERNSSPSSDSAQANTSAGKLKPSKVKKKINPRRSTICEAAKDLRSSSSSSTPTREVAASSPVSTSSDSSSKRNGSKRTTSDLDGGSKLDQRRYTICEDRQPETAIPVPLTKRRFSMHPKASANPLHDTLLQTAGKKRGRKEGKESLSRQNSLDSSSSASQGAPKKKALKSAEILSAALLETESSESTSSGSKMSRWDVQTSPELEAANPFGDIAKFIEDGVNLLKRDKVDEDQRKEGQDEVKREADPEEDEFAQRVANMETPATTPTPSPTQSNPEDSASTTTVLKELETGGGVRRSHRIKQKPQGPRASQGRGVASVALAPISMDEQLAELANIEAINEQFLRSEGLNTFQLLKENFYRCARQVSQENAEMQCDCFLTGDEEAQGHLSCGAGCINRMLMIECGPLCSNGARCTNKRFQQHQCWPCRVFRTEKKGCGITAELLIPPGEFIMEYVGEVIDSEEFERRQHLYSKDRNRHYYFMALRGEAVIDATSKGNISRYINHSCDPNAETQKWTVNGELRIGFFSVKPIQPGEEITFDYQYLRYGRDAQRCYCEAANCRGWIGGEPDSDEGEQLDEESDSDAEMDEEELEAEPEEGQPRKSAKAKAKSKLKAKLPLATGRKRKEQTKPKDREYKAGRWLKPSATGSSSSAEKPPKKPKVNKFQAMLEDPDVVEELSLLRRGGLKNQQDTLRFSRCLVRAKLLKTRLALLRVLTHGELPCRRLFLDYHGLRLLHAWISENGNDDQLREALLDTLESLPIPNRTMLSDSRVYQSVQLWSNSLEQQLAVVPQEKQAALHKRMVALLQKWQALPEIFRIPKRERIEQMKEHEREADRQQKHVHASTALEDQRERESSNDRFRQDRFRRDTTSSRIGKPIRMSGNNTICTITTQQKGSNGAPDGMTRNDNRRRSDIGPPSEQRRTLSKELRRSLFERKVALDEAERRVCTEDRLEHELRCEFFGADINTDPKQLPFYQKTDTNEWFNSDDVPVPAPPRTELLTKALLSPDIDVGQGATDVEYKLPPGVDPLPPAWNWQVTSDGDIYYYNLRERISQWEPPSPEQRLQTLLEENTTQQPLHELQIDPAVLENELIQVDTDYVGSLSAKSLAQYIEAKVRERRDLRRSKLVSIRLISPRRDEDRLYNQLESRKYKENKEKIRRRKELYRRRKIEVLPDAVDEIPVPGKALPIQPYLFSSDEEETKVAAIEQPAAEEEQDSLNMAPSTSHAAMAALGKAVAQPTGLGTVGKRKLPMPPSVTVKKHRQEQRSKKVKSSQSPLTATSAREAHEKFRFEISGHVANFLRPYRKESCTLGRITSDEDYKFLVNRLSYHITTKEMRYCEVSGNPLSCTESVKHKSYDFINQYMRQKGPVYKKPAEND</sequence>
<name>SET2_DROME</name>
<proteinExistence type="evidence at protein level"/>
<evidence type="ECO:0000250" key="1">
    <source>
        <dbReference type="UniProtKB" id="Q9BYW2"/>
    </source>
</evidence>
<evidence type="ECO:0000255" key="2">
    <source>
        <dbReference type="PROSITE-ProRule" id="PRU00155"/>
    </source>
</evidence>
<evidence type="ECO:0000255" key="3">
    <source>
        <dbReference type="PROSITE-ProRule" id="PRU00190"/>
    </source>
</evidence>
<evidence type="ECO:0000255" key="4">
    <source>
        <dbReference type="PROSITE-ProRule" id="PRU00224"/>
    </source>
</evidence>
<evidence type="ECO:0000255" key="5">
    <source>
        <dbReference type="PROSITE-ProRule" id="PRU00562"/>
    </source>
</evidence>
<evidence type="ECO:0000256" key="6">
    <source>
        <dbReference type="SAM" id="MobiDB-lite"/>
    </source>
</evidence>
<evidence type="ECO:0000269" key="7">
    <source>
    </source>
</evidence>
<evidence type="ECO:0000269" key="8">
    <source>
    </source>
</evidence>
<evidence type="ECO:0000269" key="9">
    <source>
    </source>
</evidence>
<evidence type="ECO:0000269" key="10">
    <source>
    </source>
</evidence>
<evidence type="ECO:0000303" key="11">
    <source>
    </source>
</evidence>
<evidence type="ECO:0000303" key="12">
    <source>
    </source>
</evidence>
<evidence type="ECO:0000305" key="13"/>
<evidence type="ECO:0000312" key="14">
    <source>
        <dbReference type="FlyBase" id="FBgn0030486"/>
    </source>
</evidence>